<protein>
    <recommendedName>
        <fullName evidence="1">Photosystem II protein D1</fullName>
        <shortName evidence="1">PSII D1 protein</shortName>
        <ecNumber evidence="1">1.10.3.9</ecNumber>
    </recommendedName>
    <alternativeName>
        <fullName evidence="1">Photosystem II Q(B) protein</fullName>
    </alternativeName>
</protein>
<geneLocation type="chloroplast"/>
<accession>O98736</accession>
<keyword id="KW-0007">Acetylation</keyword>
<keyword id="KW-0106">Calcium</keyword>
<keyword id="KW-0148">Chlorophyll</keyword>
<keyword id="KW-0150">Chloroplast</keyword>
<keyword id="KW-0157">Chromophore</keyword>
<keyword id="KW-0249">Electron transport</keyword>
<keyword id="KW-0359">Herbicide resistance</keyword>
<keyword id="KW-0408">Iron</keyword>
<keyword id="KW-0460">Magnesium</keyword>
<keyword id="KW-0464">Manganese</keyword>
<keyword id="KW-0472">Membrane</keyword>
<keyword id="KW-0479">Metal-binding</keyword>
<keyword id="KW-0560">Oxidoreductase</keyword>
<keyword id="KW-0597">Phosphoprotein</keyword>
<keyword id="KW-0602">Photosynthesis</keyword>
<keyword id="KW-0604">Photosystem II</keyword>
<keyword id="KW-0934">Plastid</keyword>
<keyword id="KW-0793">Thylakoid</keyword>
<keyword id="KW-0812">Transmembrane</keyword>
<keyword id="KW-1133">Transmembrane helix</keyword>
<keyword id="KW-0813">Transport</keyword>
<comment type="function">
    <text evidence="1">Photosystem II (PSII) is a light-driven water:plastoquinone oxidoreductase that uses light energy to abstract electrons from H(2)O, generating O(2) and a proton gradient subsequently used for ATP formation. It consists of a core antenna complex that captures photons, and an electron transfer chain that converts photonic excitation into a charge separation. The D1/D2 (PsbA/PsbD) reaction center heterodimer binds P680, the primary electron donor of PSII as well as several subsequent electron acceptors.</text>
</comment>
<comment type="catalytic activity">
    <reaction evidence="1">
        <text>2 a plastoquinone + 4 hnu + 2 H2O = 2 a plastoquinol + O2</text>
        <dbReference type="Rhea" id="RHEA:36359"/>
        <dbReference type="Rhea" id="RHEA-COMP:9561"/>
        <dbReference type="Rhea" id="RHEA-COMP:9562"/>
        <dbReference type="ChEBI" id="CHEBI:15377"/>
        <dbReference type="ChEBI" id="CHEBI:15379"/>
        <dbReference type="ChEBI" id="CHEBI:17757"/>
        <dbReference type="ChEBI" id="CHEBI:30212"/>
        <dbReference type="ChEBI" id="CHEBI:62192"/>
        <dbReference type="EC" id="1.10.3.9"/>
    </reaction>
</comment>
<comment type="cofactor">
    <text evidence="1">The D1/D2 heterodimer binds P680, chlorophylls that are the primary electron donor of PSII, and subsequent electron acceptors. It shares a non-heme iron and each subunit binds pheophytin, quinone, additional chlorophylls, carotenoids and lipids. D1 provides most of the ligands for the Mn4-Ca-O5 cluster of the oxygen-evolving complex (OEC). There is also a Cl(-1) ion associated with D1 and D2, which is required for oxygen evolution. The PSII complex binds additional chlorophylls, carotenoids and specific lipids.</text>
</comment>
<comment type="subunit">
    <text evidence="1">PSII is composed of 1 copy each of membrane proteins PsbA, PsbB, PsbC, PsbD, PsbE, PsbF, PsbH, PsbI, PsbJ, PsbK, PsbL, PsbM, PsbT, PsbX, PsbY, PsbZ, Psb30/Ycf12, at least 3 peripheral proteins of the oxygen-evolving complex and a large number of cofactors. It forms dimeric complexes.</text>
</comment>
<comment type="subcellular location">
    <subcellularLocation>
        <location evidence="1">Plastid</location>
        <location evidence="1">Chloroplast thylakoid membrane</location>
        <topology evidence="1">Multi-pass membrane protein</topology>
    </subcellularLocation>
</comment>
<comment type="PTM">
    <text evidence="1">Tyr-161 forms a radical intermediate that is referred to as redox-active TyrZ, YZ or Y-Z.</text>
</comment>
<comment type="PTM">
    <text evidence="1">C-terminally processed by CTPA; processing is essential to allow assembly of the oxygen-evolving complex and thus photosynthetic growth.</text>
</comment>
<comment type="miscellaneous">
    <text evidence="1">2 of the reaction center chlorophylls (ChlD1 and ChlD2) are entirely coordinated by water.</text>
</comment>
<comment type="miscellaneous">
    <text evidence="1">Herbicides such as atrazine, BNT, diuron or ioxynil bind in the Q(B) binding site and block subsequent electron transfer.</text>
</comment>
<comment type="similarity">
    <text evidence="1">Belongs to the reaction center PufL/M/PsbA/D family.</text>
</comment>
<gene>
    <name evidence="1" type="primary">psbA</name>
</gene>
<reference key="1">
    <citation type="journal article" date="1998" name="DNA Seq.">
        <title>Cloning and sequence determination of the chloroplast psbA gene in Magnolia pyramidata (Magnoliales; Magnoliaceae).</title>
        <authorList>
            <person name="Jobes D.V."/>
            <person name="Hurley D.L."/>
            <person name="Thien L.B."/>
        </authorList>
    </citation>
    <scope>NUCLEOTIDE SEQUENCE [GENOMIC DNA]</scope>
</reference>
<feature type="initiator methionine" description="Removed" evidence="1">
    <location>
        <position position="1"/>
    </location>
</feature>
<feature type="chain" id="PRO_0000090448" description="Photosystem II protein D1" evidence="1">
    <location>
        <begin position="2"/>
        <end position="344"/>
    </location>
</feature>
<feature type="propeptide" id="PRO_0000316459" evidence="1">
    <location>
        <begin position="345"/>
        <end position="353"/>
    </location>
</feature>
<feature type="transmembrane region" description="Helical" evidence="1">
    <location>
        <begin position="29"/>
        <end position="46"/>
    </location>
</feature>
<feature type="transmembrane region" description="Helical" evidence="1">
    <location>
        <begin position="118"/>
        <end position="133"/>
    </location>
</feature>
<feature type="transmembrane region" description="Helical" evidence="1">
    <location>
        <begin position="142"/>
        <end position="156"/>
    </location>
</feature>
<feature type="transmembrane region" description="Helical" evidence="1">
    <location>
        <begin position="197"/>
        <end position="218"/>
    </location>
</feature>
<feature type="transmembrane region" description="Helical" evidence="1">
    <location>
        <begin position="274"/>
        <end position="288"/>
    </location>
</feature>
<feature type="binding site" description="axial binding residue" evidence="1">
    <location>
        <position position="118"/>
    </location>
    <ligand>
        <name>chlorophyll a</name>
        <dbReference type="ChEBI" id="CHEBI:58416"/>
        <label>ChlzD1</label>
    </ligand>
    <ligandPart>
        <name>Mg</name>
        <dbReference type="ChEBI" id="CHEBI:25107"/>
    </ligandPart>
</feature>
<feature type="binding site" evidence="1">
    <location>
        <position position="126"/>
    </location>
    <ligand>
        <name>pheophytin a</name>
        <dbReference type="ChEBI" id="CHEBI:136840"/>
        <label>D1</label>
    </ligand>
</feature>
<feature type="binding site" evidence="1">
    <location>
        <position position="170"/>
    </location>
    <ligand>
        <name>[CaMn4O5] cluster</name>
        <dbReference type="ChEBI" id="CHEBI:189552"/>
    </ligand>
</feature>
<feature type="binding site" evidence="1">
    <location>
        <position position="189"/>
    </location>
    <ligand>
        <name>[CaMn4O5] cluster</name>
        <dbReference type="ChEBI" id="CHEBI:189552"/>
    </ligand>
</feature>
<feature type="binding site" description="axial binding residue" evidence="1">
    <location>
        <position position="198"/>
    </location>
    <ligand>
        <name>chlorophyll a</name>
        <dbReference type="ChEBI" id="CHEBI:58416"/>
        <label>PD1</label>
    </ligand>
    <ligandPart>
        <name>Mg</name>
        <dbReference type="ChEBI" id="CHEBI:25107"/>
    </ligandPart>
</feature>
<feature type="binding site" evidence="1">
    <location>
        <position position="215"/>
    </location>
    <ligand>
        <name>a quinone</name>
        <dbReference type="ChEBI" id="CHEBI:132124"/>
        <label>B</label>
    </ligand>
</feature>
<feature type="binding site" evidence="1">
    <location>
        <position position="215"/>
    </location>
    <ligand>
        <name>Fe cation</name>
        <dbReference type="ChEBI" id="CHEBI:24875"/>
        <note>ligand shared with heterodimeric partner</note>
    </ligand>
</feature>
<feature type="binding site" evidence="1">
    <location>
        <begin position="264"/>
        <end position="265"/>
    </location>
    <ligand>
        <name>a quinone</name>
        <dbReference type="ChEBI" id="CHEBI:132124"/>
        <label>B</label>
    </ligand>
</feature>
<feature type="binding site" evidence="1">
    <location>
        <position position="272"/>
    </location>
    <ligand>
        <name>Fe cation</name>
        <dbReference type="ChEBI" id="CHEBI:24875"/>
        <note>ligand shared with heterodimeric partner</note>
    </ligand>
</feature>
<feature type="binding site" evidence="1">
    <location>
        <position position="332"/>
    </location>
    <ligand>
        <name>[CaMn4O5] cluster</name>
        <dbReference type="ChEBI" id="CHEBI:189552"/>
    </ligand>
</feature>
<feature type="binding site" evidence="1">
    <location>
        <position position="333"/>
    </location>
    <ligand>
        <name>[CaMn4O5] cluster</name>
        <dbReference type="ChEBI" id="CHEBI:189552"/>
    </ligand>
</feature>
<feature type="binding site" evidence="1">
    <location>
        <position position="342"/>
    </location>
    <ligand>
        <name>[CaMn4O5] cluster</name>
        <dbReference type="ChEBI" id="CHEBI:189552"/>
    </ligand>
</feature>
<feature type="binding site" evidence="1">
    <location>
        <position position="344"/>
    </location>
    <ligand>
        <name>[CaMn4O5] cluster</name>
        <dbReference type="ChEBI" id="CHEBI:189552"/>
    </ligand>
</feature>
<feature type="site" description="Tyrosine radical intermediate" evidence="1">
    <location>
        <position position="161"/>
    </location>
</feature>
<feature type="site" description="Stabilizes free radical intermediate" evidence="1">
    <location>
        <position position="190"/>
    </location>
</feature>
<feature type="site" description="Cleavage; by CTPA" evidence="1">
    <location>
        <begin position="344"/>
        <end position="345"/>
    </location>
</feature>
<feature type="modified residue" description="N-acetylthreonine" evidence="1">
    <location>
        <position position="2"/>
    </location>
</feature>
<feature type="modified residue" description="Phosphothreonine" evidence="1">
    <location>
        <position position="2"/>
    </location>
</feature>
<dbReference type="EC" id="1.10.3.9" evidence="1"/>
<dbReference type="EMBL" id="U63020">
    <property type="protein sequence ID" value="AAD00106.1"/>
    <property type="molecule type" value="Genomic_DNA"/>
</dbReference>
<dbReference type="SMR" id="O98736"/>
<dbReference type="GO" id="GO:0009535">
    <property type="term" value="C:chloroplast thylakoid membrane"/>
    <property type="evidence" value="ECO:0007669"/>
    <property type="project" value="UniProtKB-SubCell"/>
</dbReference>
<dbReference type="GO" id="GO:0009523">
    <property type="term" value="C:photosystem II"/>
    <property type="evidence" value="ECO:0007669"/>
    <property type="project" value="UniProtKB-KW"/>
</dbReference>
<dbReference type="GO" id="GO:0016168">
    <property type="term" value="F:chlorophyll binding"/>
    <property type="evidence" value="ECO:0007669"/>
    <property type="project" value="UniProtKB-UniRule"/>
</dbReference>
<dbReference type="GO" id="GO:0045156">
    <property type="term" value="F:electron transporter, transferring electrons within the cyclic electron transport pathway of photosynthesis activity"/>
    <property type="evidence" value="ECO:0007669"/>
    <property type="project" value="InterPro"/>
</dbReference>
<dbReference type="GO" id="GO:0005506">
    <property type="term" value="F:iron ion binding"/>
    <property type="evidence" value="ECO:0007669"/>
    <property type="project" value="UniProtKB-UniRule"/>
</dbReference>
<dbReference type="GO" id="GO:0016682">
    <property type="term" value="F:oxidoreductase activity, acting on diphenols and related substances as donors, oxygen as acceptor"/>
    <property type="evidence" value="ECO:0007669"/>
    <property type="project" value="UniProtKB-UniRule"/>
</dbReference>
<dbReference type="GO" id="GO:0010242">
    <property type="term" value="F:oxygen evolving activity"/>
    <property type="evidence" value="ECO:0007669"/>
    <property type="project" value="UniProtKB-EC"/>
</dbReference>
<dbReference type="GO" id="GO:0009772">
    <property type="term" value="P:photosynthetic electron transport in photosystem II"/>
    <property type="evidence" value="ECO:0007669"/>
    <property type="project" value="InterPro"/>
</dbReference>
<dbReference type="GO" id="GO:0009635">
    <property type="term" value="P:response to herbicide"/>
    <property type="evidence" value="ECO:0007669"/>
    <property type="project" value="UniProtKB-KW"/>
</dbReference>
<dbReference type="CDD" id="cd09289">
    <property type="entry name" value="Photosystem-II_D1"/>
    <property type="match status" value="1"/>
</dbReference>
<dbReference type="FunFam" id="1.20.85.10:FF:000002">
    <property type="entry name" value="Photosystem II protein D1"/>
    <property type="match status" value="1"/>
</dbReference>
<dbReference type="Gene3D" id="1.20.85.10">
    <property type="entry name" value="Photosystem II protein D1-like"/>
    <property type="match status" value="1"/>
</dbReference>
<dbReference type="HAMAP" id="MF_01379">
    <property type="entry name" value="PSII_PsbA_D1"/>
    <property type="match status" value="1"/>
</dbReference>
<dbReference type="InterPro" id="IPR055266">
    <property type="entry name" value="D1/D2"/>
</dbReference>
<dbReference type="InterPro" id="IPR036854">
    <property type="entry name" value="Photo_II_D1/D2_sf"/>
</dbReference>
<dbReference type="InterPro" id="IPR000484">
    <property type="entry name" value="Photo_RC_L/M"/>
</dbReference>
<dbReference type="InterPro" id="IPR055265">
    <property type="entry name" value="Photo_RC_L/M_CS"/>
</dbReference>
<dbReference type="InterPro" id="IPR005867">
    <property type="entry name" value="PSII_D1"/>
</dbReference>
<dbReference type="NCBIfam" id="TIGR01151">
    <property type="entry name" value="psbA"/>
    <property type="match status" value="1"/>
</dbReference>
<dbReference type="PANTHER" id="PTHR33149:SF12">
    <property type="entry name" value="PHOTOSYSTEM II D2 PROTEIN"/>
    <property type="match status" value="1"/>
</dbReference>
<dbReference type="PANTHER" id="PTHR33149">
    <property type="entry name" value="PHOTOSYSTEM II PROTEIN D1"/>
    <property type="match status" value="1"/>
</dbReference>
<dbReference type="Pfam" id="PF00124">
    <property type="entry name" value="Photo_RC"/>
    <property type="match status" value="1"/>
</dbReference>
<dbReference type="PRINTS" id="PR00256">
    <property type="entry name" value="REACTNCENTRE"/>
</dbReference>
<dbReference type="SUPFAM" id="SSF81483">
    <property type="entry name" value="Bacterial photosystem II reaction centre, L and M subunits"/>
    <property type="match status" value="1"/>
</dbReference>
<dbReference type="PROSITE" id="PS00244">
    <property type="entry name" value="REACTION_CENTER"/>
    <property type="match status" value="1"/>
</dbReference>
<name>PSBA_MAGFP</name>
<evidence type="ECO:0000255" key="1">
    <source>
        <dbReference type="HAMAP-Rule" id="MF_01379"/>
    </source>
</evidence>
<organism>
    <name type="scientific">Magnolia fraseri var. pyramidata</name>
    <name type="common">Pyramid magnolia</name>
    <name type="synonym">Magnolia pyramidata</name>
    <dbReference type="NCBI Taxonomy" id="44759"/>
    <lineage>
        <taxon>Eukaryota</taxon>
        <taxon>Viridiplantae</taxon>
        <taxon>Streptophyta</taxon>
        <taxon>Embryophyta</taxon>
        <taxon>Tracheophyta</taxon>
        <taxon>Spermatophyta</taxon>
        <taxon>Magnoliopsida</taxon>
        <taxon>Magnoliidae</taxon>
        <taxon>Magnoliales</taxon>
        <taxon>Magnoliaceae</taxon>
        <taxon>Magnolia</taxon>
    </lineage>
</organism>
<proteinExistence type="inferred from homology"/>
<sequence>MTAILERRESTSLWGRFCNWITSTENRLYIGWFGVLMIPTLLTATSVFIIAFIAAPPVDIDGIREPVSGSLLYGNNIISGAIIPTSAAIGLHFYPIWEAASVDEWLYNGGPYELIVLHFLLGVACYMGREWELSFRLGMRPWIAVAYSAPVAAATAVFLIYPIGQGSFSDGMPLGISGTFNFMIVFQAEHNILMHPFHMLGVAGVFGGSLFSAMHGSLVTSSLIRETTENESANEGYRFGQEEETYNIVAAHGYFGRLIFQYASFNNSRSLHFFLAAWPVVGIWFTALGISTMAFNLNGFNFNQSVVDSQGRVINTWADIINRANLGMEVMHERNAHNFPLDLAAVEAPSTNG</sequence>